<gene>
    <name evidence="1" type="primary">prfA</name>
    <name type="ordered locus">BMEI0191</name>
</gene>
<proteinExistence type="inferred from homology"/>
<protein>
    <recommendedName>
        <fullName evidence="1">Peptide chain release factor 1</fullName>
        <shortName evidence="1">RF-1</shortName>
    </recommendedName>
</protein>
<name>RF1_BRUME</name>
<evidence type="ECO:0000255" key="1">
    <source>
        <dbReference type="HAMAP-Rule" id="MF_00093"/>
    </source>
</evidence>
<evidence type="ECO:0000256" key="2">
    <source>
        <dbReference type="SAM" id="MobiDB-lite"/>
    </source>
</evidence>
<evidence type="ECO:0000305" key="3"/>
<sequence length="359" mass="39909">MIALPQDRMDQLLKRFSMIESQMANNPDSDTYVKLASEYSELQDVVGKIRELSDARMEASDLAAMRDDASTDAEMRALAVEELPEVEKRIAVLEQDVQILLLPKDAADDKNAILEIRAGTGGLEAALFAGDLFRMYERYAAEKGWRVELVSASEGDAGGYKEIIATVSGKGVFSKLKFESGVHRVQRVPETEAGGRIHTSAATVAVLPEAEDIDIEIRNEDIRIDTMRASGAGGQHVNTTDSAVRITHIPTGIMVVQAEKSQHQNRARAMQILRARLYDMERQKAESERSQARRSQVGSGDRSERIRTYNFPQGRVTDHRINLTLYKLDRVMEGELDELVDALISDHQTALLAELGEQP</sequence>
<reference key="1">
    <citation type="journal article" date="2002" name="Proc. Natl. Acad. Sci. U.S.A.">
        <title>The genome sequence of the facultative intracellular pathogen Brucella melitensis.</title>
        <authorList>
            <person name="DelVecchio V.G."/>
            <person name="Kapatral V."/>
            <person name="Redkar R.J."/>
            <person name="Patra G."/>
            <person name="Mujer C."/>
            <person name="Los T."/>
            <person name="Ivanova N."/>
            <person name="Anderson I."/>
            <person name="Bhattacharyya A."/>
            <person name="Lykidis A."/>
            <person name="Reznik G."/>
            <person name="Jablonski L."/>
            <person name="Larsen N."/>
            <person name="D'Souza M."/>
            <person name="Bernal A."/>
            <person name="Mazur M."/>
            <person name="Goltsman E."/>
            <person name="Selkov E."/>
            <person name="Elzer P.H."/>
            <person name="Hagius S."/>
            <person name="O'Callaghan D."/>
            <person name="Letesson J.-J."/>
            <person name="Haselkorn R."/>
            <person name="Kyrpides N.C."/>
            <person name="Overbeek R."/>
        </authorList>
    </citation>
    <scope>NUCLEOTIDE SEQUENCE [LARGE SCALE GENOMIC DNA]</scope>
    <source>
        <strain>ATCC 23456 / CCUG 17765 / NCTC 10094 / 16M</strain>
    </source>
</reference>
<comment type="function">
    <text evidence="1">Peptide chain release factor 1 directs the termination of translation in response to the peptide chain termination codons UAG and UAA.</text>
</comment>
<comment type="subcellular location">
    <subcellularLocation>
        <location evidence="1">Cytoplasm</location>
    </subcellularLocation>
</comment>
<comment type="PTM">
    <text evidence="1">Methylated by PrmC. Methylation increases the termination efficiency of RF1.</text>
</comment>
<comment type="similarity">
    <text evidence="1">Belongs to the prokaryotic/mitochondrial release factor family.</text>
</comment>
<comment type="sequence caution" evidence="3">
    <conflict type="erroneous initiation">
        <sequence resource="EMBL-CDS" id="AAL51373"/>
    </conflict>
</comment>
<organism>
    <name type="scientific">Brucella melitensis biotype 1 (strain ATCC 23456 / CCUG 17765 / NCTC 10094 / 16M)</name>
    <dbReference type="NCBI Taxonomy" id="224914"/>
    <lineage>
        <taxon>Bacteria</taxon>
        <taxon>Pseudomonadati</taxon>
        <taxon>Pseudomonadota</taxon>
        <taxon>Alphaproteobacteria</taxon>
        <taxon>Hyphomicrobiales</taxon>
        <taxon>Brucellaceae</taxon>
        <taxon>Brucella/Ochrobactrum group</taxon>
        <taxon>Brucella</taxon>
    </lineage>
</organism>
<feature type="chain" id="PRO_0000177644" description="Peptide chain release factor 1">
    <location>
        <begin position="1"/>
        <end position="359"/>
    </location>
</feature>
<feature type="region of interest" description="Disordered" evidence="2">
    <location>
        <begin position="283"/>
        <end position="309"/>
    </location>
</feature>
<feature type="modified residue" description="N5-methylglutamine" evidence="1">
    <location>
        <position position="235"/>
    </location>
</feature>
<dbReference type="EMBL" id="AE008917">
    <property type="protein sequence ID" value="AAL51373.1"/>
    <property type="status" value="ALT_INIT"/>
    <property type="molecule type" value="Genomic_DNA"/>
</dbReference>
<dbReference type="PIR" id="AB3276">
    <property type="entry name" value="AB3276"/>
</dbReference>
<dbReference type="RefSeq" id="WP_004686702.1">
    <property type="nucleotide sequence ID" value="NZ_GG703778.1"/>
</dbReference>
<dbReference type="SMR" id="Q8YJ95"/>
<dbReference type="GeneID" id="29594610"/>
<dbReference type="KEGG" id="bme:BMEI0191"/>
<dbReference type="KEGG" id="bmel:DK63_1245"/>
<dbReference type="PATRIC" id="fig|224914.52.peg.1312"/>
<dbReference type="eggNOG" id="COG0216">
    <property type="taxonomic scope" value="Bacteria"/>
</dbReference>
<dbReference type="Proteomes" id="UP000000419">
    <property type="component" value="Chromosome I"/>
</dbReference>
<dbReference type="GO" id="GO:0005737">
    <property type="term" value="C:cytoplasm"/>
    <property type="evidence" value="ECO:0007669"/>
    <property type="project" value="UniProtKB-SubCell"/>
</dbReference>
<dbReference type="GO" id="GO:0016149">
    <property type="term" value="F:translation release factor activity, codon specific"/>
    <property type="evidence" value="ECO:0007669"/>
    <property type="project" value="UniProtKB-UniRule"/>
</dbReference>
<dbReference type="FunFam" id="3.30.160.20:FF:000004">
    <property type="entry name" value="Peptide chain release factor 1"/>
    <property type="match status" value="1"/>
</dbReference>
<dbReference type="FunFam" id="3.30.70.1660:FF:000002">
    <property type="entry name" value="Peptide chain release factor 1"/>
    <property type="match status" value="1"/>
</dbReference>
<dbReference type="FunFam" id="3.30.70.1660:FF:000004">
    <property type="entry name" value="Peptide chain release factor 1"/>
    <property type="match status" value="1"/>
</dbReference>
<dbReference type="Gene3D" id="3.30.160.20">
    <property type="match status" value="1"/>
</dbReference>
<dbReference type="Gene3D" id="3.30.70.1660">
    <property type="match status" value="2"/>
</dbReference>
<dbReference type="Gene3D" id="6.10.140.1950">
    <property type="match status" value="1"/>
</dbReference>
<dbReference type="HAMAP" id="MF_00093">
    <property type="entry name" value="Rel_fac_1"/>
    <property type="match status" value="1"/>
</dbReference>
<dbReference type="InterPro" id="IPR005139">
    <property type="entry name" value="PCRF"/>
</dbReference>
<dbReference type="InterPro" id="IPR000352">
    <property type="entry name" value="Pep_chain_release_fac_I"/>
</dbReference>
<dbReference type="InterPro" id="IPR045853">
    <property type="entry name" value="Pep_chain_release_fac_I_sf"/>
</dbReference>
<dbReference type="InterPro" id="IPR050057">
    <property type="entry name" value="Prokaryotic/Mito_RF"/>
</dbReference>
<dbReference type="InterPro" id="IPR004373">
    <property type="entry name" value="RF-1"/>
</dbReference>
<dbReference type="NCBIfam" id="TIGR00019">
    <property type="entry name" value="prfA"/>
    <property type="match status" value="1"/>
</dbReference>
<dbReference type="NCBIfam" id="NF001859">
    <property type="entry name" value="PRK00591.1"/>
    <property type="match status" value="1"/>
</dbReference>
<dbReference type="PANTHER" id="PTHR43804">
    <property type="entry name" value="LD18447P"/>
    <property type="match status" value="1"/>
</dbReference>
<dbReference type="PANTHER" id="PTHR43804:SF7">
    <property type="entry name" value="LD18447P"/>
    <property type="match status" value="1"/>
</dbReference>
<dbReference type="Pfam" id="PF03462">
    <property type="entry name" value="PCRF"/>
    <property type="match status" value="1"/>
</dbReference>
<dbReference type="Pfam" id="PF00472">
    <property type="entry name" value="RF-1"/>
    <property type="match status" value="1"/>
</dbReference>
<dbReference type="SMART" id="SM00937">
    <property type="entry name" value="PCRF"/>
    <property type="match status" value="1"/>
</dbReference>
<dbReference type="SUPFAM" id="SSF75620">
    <property type="entry name" value="Release factor"/>
    <property type="match status" value="1"/>
</dbReference>
<dbReference type="PROSITE" id="PS00745">
    <property type="entry name" value="RF_PROK_I"/>
    <property type="match status" value="1"/>
</dbReference>
<accession>Q8YJ95</accession>
<keyword id="KW-0963">Cytoplasm</keyword>
<keyword id="KW-0488">Methylation</keyword>
<keyword id="KW-0648">Protein biosynthesis</keyword>